<gene>
    <name type="ordered locus">Pfl01_4162</name>
</gene>
<dbReference type="EC" id="3.6.1.-" evidence="1"/>
<dbReference type="EMBL" id="CP000094">
    <property type="protein sequence ID" value="ABA75899.1"/>
    <property type="molecule type" value="Genomic_DNA"/>
</dbReference>
<dbReference type="RefSeq" id="WP_011335438.1">
    <property type="nucleotide sequence ID" value="NC_007492.2"/>
</dbReference>
<dbReference type="SMR" id="Q3K8K5"/>
<dbReference type="KEGG" id="pfo:Pfl01_4162"/>
<dbReference type="eggNOG" id="COG0424">
    <property type="taxonomic scope" value="Bacteria"/>
</dbReference>
<dbReference type="HOGENOM" id="CLU_040416_1_0_6"/>
<dbReference type="Proteomes" id="UP000002704">
    <property type="component" value="Chromosome"/>
</dbReference>
<dbReference type="GO" id="GO:0005737">
    <property type="term" value="C:cytoplasm"/>
    <property type="evidence" value="ECO:0007669"/>
    <property type="project" value="UniProtKB-SubCell"/>
</dbReference>
<dbReference type="GO" id="GO:0047429">
    <property type="term" value="F:nucleoside triphosphate diphosphatase activity"/>
    <property type="evidence" value="ECO:0007669"/>
    <property type="project" value="InterPro"/>
</dbReference>
<dbReference type="GO" id="GO:0009117">
    <property type="term" value="P:nucleotide metabolic process"/>
    <property type="evidence" value="ECO:0007669"/>
    <property type="project" value="UniProtKB-KW"/>
</dbReference>
<dbReference type="CDD" id="cd00555">
    <property type="entry name" value="Maf"/>
    <property type="match status" value="1"/>
</dbReference>
<dbReference type="FunFam" id="3.90.950.10:FF:000005">
    <property type="entry name" value="7-methyl-GTP pyrophosphatase"/>
    <property type="match status" value="1"/>
</dbReference>
<dbReference type="Gene3D" id="3.90.950.10">
    <property type="match status" value="1"/>
</dbReference>
<dbReference type="HAMAP" id="MF_00528">
    <property type="entry name" value="Maf"/>
    <property type="match status" value="1"/>
</dbReference>
<dbReference type="InterPro" id="IPR029001">
    <property type="entry name" value="ITPase-like_fam"/>
</dbReference>
<dbReference type="InterPro" id="IPR003697">
    <property type="entry name" value="Maf-like"/>
</dbReference>
<dbReference type="NCBIfam" id="TIGR00172">
    <property type="entry name" value="maf"/>
    <property type="match status" value="1"/>
</dbReference>
<dbReference type="PANTHER" id="PTHR43213:SF10">
    <property type="entry name" value="7-METHYL-GTP PYROPHOSPHATASE"/>
    <property type="match status" value="1"/>
</dbReference>
<dbReference type="PANTHER" id="PTHR43213">
    <property type="entry name" value="BIFUNCTIONAL DTTP/UTP PYROPHOSPHATASE/METHYLTRANSFERASE PROTEIN-RELATED"/>
    <property type="match status" value="1"/>
</dbReference>
<dbReference type="Pfam" id="PF02545">
    <property type="entry name" value="Maf"/>
    <property type="match status" value="1"/>
</dbReference>
<dbReference type="PIRSF" id="PIRSF006305">
    <property type="entry name" value="Maf"/>
    <property type="match status" value="1"/>
</dbReference>
<dbReference type="SUPFAM" id="SSF52972">
    <property type="entry name" value="ITPase-like"/>
    <property type="match status" value="1"/>
</dbReference>
<organism>
    <name type="scientific">Pseudomonas fluorescens (strain Pf0-1)</name>
    <dbReference type="NCBI Taxonomy" id="205922"/>
    <lineage>
        <taxon>Bacteria</taxon>
        <taxon>Pseudomonadati</taxon>
        <taxon>Pseudomonadota</taxon>
        <taxon>Gammaproteobacteria</taxon>
        <taxon>Pseudomonadales</taxon>
        <taxon>Pseudomonadaceae</taxon>
        <taxon>Pseudomonas</taxon>
    </lineage>
</organism>
<protein>
    <recommendedName>
        <fullName evidence="1">7-methyl-GTP pyrophosphatase</fullName>
        <shortName evidence="1">m(7)GTP pyrophosphatase</shortName>
        <ecNumber evidence="1">3.6.1.-</ecNumber>
    </recommendedName>
</protein>
<proteinExistence type="inferred from homology"/>
<accession>Q3K8K5</accession>
<evidence type="ECO:0000255" key="1">
    <source>
        <dbReference type="HAMAP-Rule" id="MF_00528"/>
    </source>
</evidence>
<name>NTPPB_PSEPF</name>
<sequence>MLPLLLASSSTYRRELLSRLRLPFVCSSPDIDESHRPDESAIELVKRLAEQKARALADSHPAHLIIGSDQVAVLGERIIGKPHTFENAREQLMAASGASVTFLTGLALLNSQTGHCQVDCVPFTVHMRVLDQARVERYLRAEQPYDCAGSFKAEGLGVSLFQSTEGPDATSLIGLPLIRLIDMLLAEGVQIP</sequence>
<keyword id="KW-0963">Cytoplasm</keyword>
<keyword id="KW-0378">Hydrolase</keyword>
<keyword id="KW-0546">Nucleotide metabolism</keyword>
<comment type="function">
    <text evidence="1">Nucleoside triphosphate pyrophosphatase that hydrolyzes 7-methyl-GTP (m(7)GTP). May have a dual role in cell division arrest and in preventing the incorporation of modified nucleotides into cellular nucleic acids.</text>
</comment>
<comment type="catalytic activity">
    <reaction evidence="1">
        <text>N(7)-methyl-GTP + H2O = N(7)-methyl-GMP + diphosphate + H(+)</text>
        <dbReference type="Rhea" id="RHEA:58744"/>
        <dbReference type="ChEBI" id="CHEBI:15377"/>
        <dbReference type="ChEBI" id="CHEBI:15378"/>
        <dbReference type="ChEBI" id="CHEBI:33019"/>
        <dbReference type="ChEBI" id="CHEBI:58285"/>
        <dbReference type="ChEBI" id="CHEBI:87133"/>
    </reaction>
</comment>
<comment type="cofactor">
    <cofactor evidence="1">
        <name>a divalent metal cation</name>
        <dbReference type="ChEBI" id="CHEBI:60240"/>
    </cofactor>
</comment>
<comment type="subcellular location">
    <subcellularLocation>
        <location evidence="1">Cytoplasm</location>
    </subcellularLocation>
</comment>
<comment type="similarity">
    <text evidence="1">Belongs to the Maf family. YceF subfamily.</text>
</comment>
<feature type="chain" id="PRO_0000267381" description="7-methyl-GTP pyrophosphatase">
    <location>
        <begin position="1"/>
        <end position="192"/>
    </location>
</feature>
<feature type="active site" description="Proton acceptor" evidence="1">
    <location>
        <position position="69"/>
    </location>
</feature>
<feature type="site" description="Important for substrate specificity" evidence="1">
    <location>
        <position position="12"/>
    </location>
</feature>
<feature type="site" description="Important for substrate specificity" evidence="1">
    <location>
        <position position="70"/>
    </location>
</feature>
<feature type="site" description="Important for substrate specificity" evidence="1">
    <location>
        <position position="154"/>
    </location>
</feature>
<reference key="1">
    <citation type="journal article" date="2009" name="Genome Biol.">
        <title>Genomic and genetic analyses of diversity and plant interactions of Pseudomonas fluorescens.</title>
        <authorList>
            <person name="Silby M.W."/>
            <person name="Cerdeno-Tarraga A.M."/>
            <person name="Vernikos G.S."/>
            <person name="Giddens S.R."/>
            <person name="Jackson R.W."/>
            <person name="Preston G.M."/>
            <person name="Zhang X.-X."/>
            <person name="Moon C.D."/>
            <person name="Gehrig S.M."/>
            <person name="Godfrey S.A.C."/>
            <person name="Knight C.G."/>
            <person name="Malone J.G."/>
            <person name="Robinson Z."/>
            <person name="Spiers A.J."/>
            <person name="Harris S."/>
            <person name="Challis G.L."/>
            <person name="Yaxley A.M."/>
            <person name="Harris D."/>
            <person name="Seeger K."/>
            <person name="Murphy L."/>
            <person name="Rutter S."/>
            <person name="Squares R."/>
            <person name="Quail M.A."/>
            <person name="Saunders E."/>
            <person name="Mavromatis K."/>
            <person name="Brettin T.S."/>
            <person name="Bentley S.D."/>
            <person name="Hothersall J."/>
            <person name="Stephens E."/>
            <person name="Thomas C.M."/>
            <person name="Parkhill J."/>
            <person name="Levy S.B."/>
            <person name="Rainey P.B."/>
            <person name="Thomson N.R."/>
        </authorList>
    </citation>
    <scope>NUCLEOTIDE SEQUENCE [LARGE SCALE GENOMIC DNA]</scope>
    <source>
        <strain>Pf0-1</strain>
    </source>
</reference>